<organism>
    <name type="scientific">Caulobacter vibrioides (strain NA1000 / CB15N)</name>
    <name type="common">Caulobacter crescentus</name>
    <dbReference type="NCBI Taxonomy" id="565050"/>
    <lineage>
        <taxon>Bacteria</taxon>
        <taxon>Pseudomonadati</taxon>
        <taxon>Pseudomonadota</taxon>
        <taxon>Alphaproteobacteria</taxon>
        <taxon>Caulobacterales</taxon>
        <taxon>Caulobacteraceae</taxon>
        <taxon>Caulobacter</taxon>
    </lineage>
</organism>
<name>RSMH_CAUVN</name>
<accession>B8H0A2</accession>
<sequence length="311" mass="33253">MSAAPHISVLLDEVVEALDAKPGDVVVDGTFGAGGYTRAVLPTGASVVAFDRDPTVRQFAANLPADRFRLVQARFSEMLDELGPESVEGVMLDLGVSSMQLDQAERGFSFMRDGPLDMRMGDTGPTAADLVNTLDHAELAKILYVYGEEHASRRIASFILRRREERPFERTLDLAEVIERAVGGRKGAKVHPATRSFQGLRIAVNDELGELEAGLAAAERVLKPGGRLVVVTFHSLEDRIVKAFLAERAGKAPGGSRHAPPVAAGAAPSFQLISNKAIAPSEAELAVNPRARSSKLRAAVRTDAPVWEAAG</sequence>
<comment type="function">
    <text evidence="1">Specifically methylates the N4 position of cytidine in position 1402 (C1402) of 16S rRNA.</text>
</comment>
<comment type="catalytic activity">
    <reaction evidence="1">
        <text>cytidine(1402) in 16S rRNA + S-adenosyl-L-methionine = N(4)-methylcytidine(1402) in 16S rRNA + S-adenosyl-L-homocysteine + H(+)</text>
        <dbReference type="Rhea" id="RHEA:42928"/>
        <dbReference type="Rhea" id="RHEA-COMP:10286"/>
        <dbReference type="Rhea" id="RHEA-COMP:10287"/>
        <dbReference type="ChEBI" id="CHEBI:15378"/>
        <dbReference type="ChEBI" id="CHEBI:57856"/>
        <dbReference type="ChEBI" id="CHEBI:59789"/>
        <dbReference type="ChEBI" id="CHEBI:74506"/>
        <dbReference type="ChEBI" id="CHEBI:82748"/>
        <dbReference type="EC" id="2.1.1.199"/>
    </reaction>
</comment>
<comment type="subcellular location">
    <subcellularLocation>
        <location evidence="1">Cytoplasm</location>
    </subcellularLocation>
</comment>
<comment type="similarity">
    <text evidence="1">Belongs to the methyltransferase superfamily. RsmH family.</text>
</comment>
<protein>
    <recommendedName>
        <fullName evidence="1">Ribosomal RNA small subunit methyltransferase H</fullName>
        <ecNumber evidence="1">2.1.1.199</ecNumber>
    </recommendedName>
    <alternativeName>
        <fullName evidence="1">16S rRNA m(4)C1402 methyltransferase</fullName>
    </alternativeName>
    <alternativeName>
        <fullName evidence="1">rRNA (cytosine-N(4)-)-methyltransferase RsmH</fullName>
    </alternativeName>
</protein>
<keyword id="KW-0963">Cytoplasm</keyword>
<keyword id="KW-0489">Methyltransferase</keyword>
<keyword id="KW-1185">Reference proteome</keyword>
<keyword id="KW-0698">rRNA processing</keyword>
<keyword id="KW-0949">S-adenosyl-L-methionine</keyword>
<keyword id="KW-0808">Transferase</keyword>
<feature type="chain" id="PRO_0000386791" description="Ribosomal RNA small subunit methyltransferase H">
    <location>
        <begin position="1"/>
        <end position="311"/>
    </location>
</feature>
<feature type="binding site" evidence="1">
    <location>
        <begin position="34"/>
        <end position="36"/>
    </location>
    <ligand>
        <name>S-adenosyl-L-methionine</name>
        <dbReference type="ChEBI" id="CHEBI:59789"/>
    </ligand>
</feature>
<feature type="binding site" evidence="1">
    <location>
        <position position="51"/>
    </location>
    <ligand>
        <name>S-adenosyl-L-methionine</name>
        <dbReference type="ChEBI" id="CHEBI:59789"/>
    </ligand>
</feature>
<feature type="binding site" evidence="1">
    <location>
        <position position="75"/>
    </location>
    <ligand>
        <name>S-adenosyl-L-methionine</name>
        <dbReference type="ChEBI" id="CHEBI:59789"/>
    </ligand>
</feature>
<feature type="binding site" evidence="1">
    <location>
        <position position="93"/>
    </location>
    <ligand>
        <name>S-adenosyl-L-methionine</name>
        <dbReference type="ChEBI" id="CHEBI:59789"/>
    </ligand>
</feature>
<feature type="binding site" evidence="1">
    <location>
        <position position="100"/>
    </location>
    <ligand>
        <name>S-adenosyl-L-methionine</name>
        <dbReference type="ChEBI" id="CHEBI:59789"/>
    </ligand>
</feature>
<gene>
    <name evidence="1" type="primary">rsmH</name>
    <name type="synonym">mraW</name>
    <name type="ordered locus">CCNA_02645</name>
</gene>
<evidence type="ECO:0000255" key="1">
    <source>
        <dbReference type="HAMAP-Rule" id="MF_01007"/>
    </source>
</evidence>
<reference key="1">
    <citation type="journal article" date="2010" name="J. Bacteriol.">
        <title>The genetic basis of laboratory adaptation in Caulobacter crescentus.</title>
        <authorList>
            <person name="Marks M.E."/>
            <person name="Castro-Rojas C.M."/>
            <person name="Teiling C."/>
            <person name="Du L."/>
            <person name="Kapatral V."/>
            <person name="Walunas T.L."/>
            <person name="Crosson S."/>
        </authorList>
    </citation>
    <scope>NUCLEOTIDE SEQUENCE [LARGE SCALE GENOMIC DNA]</scope>
    <source>
        <strain>NA1000 / CB15N</strain>
    </source>
</reference>
<dbReference type="EC" id="2.1.1.199" evidence="1"/>
<dbReference type="EMBL" id="CP001340">
    <property type="protein sequence ID" value="ACL96110.1"/>
    <property type="molecule type" value="Genomic_DNA"/>
</dbReference>
<dbReference type="RefSeq" id="WP_010920418.1">
    <property type="nucleotide sequence ID" value="NC_011916.1"/>
</dbReference>
<dbReference type="RefSeq" id="YP_002518018.1">
    <property type="nucleotide sequence ID" value="NC_011916.1"/>
</dbReference>
<dbReference type="SMR" id="B8H0A2"/>
<dbReference type="GeneID" id="7332747"/>
<dbReference type="KEGG" id="ccs:CCNA_02645"/>
<dbReference type="PATRIC" id="fig|565050.3.peg.2593"/>
<dbReference type="HOGENOM" id="CLU_038422_1_1_5"/>
<dbReference type="OrthoDB" id="9806637at2"/>
<dbReference type="PhylomeDB" id="B8H0A2"/>
<dbReference type="Proteomes" id="UP000001364">
    <property type="component" value="Chromosome"/>
</dbReference>
<dbReference type="GO" id="GO:0005737">
    <property type="term" value="C:cytoplasm"/>
    <property type="evidence" value="ECO:0007669"/>
    <property type="project" value="UniProtKB-SubCell"/>
</dbReference>
<dbReference type="GO" id="GO:0071424">
    <property type="term" value="F:rRNA (cytosine-N4-)-methyltransferase activity"/>
    <property type="evidence" value="ECO:0007669"/>
    <property type="project" value="UniProtKB-UniRule"/>
</dbReference>
<dbReference type="GO" id="GO:0070475">
    <property type="term" value="P:rRNA base methylation"/>
    <property type="evidence" value="ECO:0007669"/>
    <property type="project" value="UniProtKB-UniRule"/>
</dbReference>
<dbReference type="Gene3D" id="1.10.150.170">
    <property type="entry name" value="Putative methyltransferase TM0872, insert domain"/>
    <property type="match status" value="1"/>
</dbReference>
<dbReference type="Gene3D" id="3.40.50.150">
    <property type="entry name" value="Vaccinia Virus protein VP39"/>
    <property type="match status" value="1"/>
</dbReference>
<dbReference type="HAMAP" id="MF_01007">
    <property type="entry name" value="16SrRNA_methyltr_H"/>
    <property type="match status" value="1"/>
</dbReference>
<dbReference type="InterPro" id="IPR002903">
    <property type="entry name" value="RsmH"/>
</dbReference>
<dbReference type="InterPro" id="IPR023397">
    <property type="entry name" value="SAM-dep_MeTrfase_MraW_recog"/>
</dbReference>
<dbReference type="InterPro" id="IPR029063">
    <property type="entry name" value="SAM-dependent_MTases_sf"/>
</dbReference>
<dbReference type="NCBIfam" id="TIGR00006">
    <property type="entry name" value="16S rRNA (cytosine(1402)-N(4))-methyltransferase RsmH"/>
    <property type="match status" value="1"/>
</dbReference>
<dbReference type="PANTHER" id="PTHR11265:SF0">
    <property type="entry name" value="12S RRNA N4-METHYLCYTIDINE METHYLTRANSFERASE"/>
    <property type="match status" value="1"/>
</dbReference>
<dbReference type="PANTHER" id="PTHR11265">
    <property type="entry name" value="S-ADENOSYL-METHYLTRANSFERASE MRAW"/>
    <property type="match status" value="1"/>
</dbReference>
<dbReference type="Pfam" id="PF01795">
    <property type="entry name" value="Methyltransf_5"/>
    <property type="match status" value="1"/>
</dbReference>
<dbReference type="PIRSF" id="PIRSF004486">
    <property type="entry name" value="MraW"/>
    <property type="match status" value="1"/>
</dbReference>
<dbReference type="SUPFAM" id="SSF81799">
    <property type="entry name" value="Putative methyltransferase TM0872, insert domain"/>
    <property type="match status" value="1"/>
</dbReference>
<dbReference type="SUPFAM" id="SSF53335">
    <property type="entry name" value="S-adenosyl-L-methionine-dependent methyltransferases"/>
    <property type="match status" value="1"/>
</dbReference>
<proteinExistence type="inferred from homology"/>